<proteinExistence type="inferred from homology"/>
<dbReference type="EC" id="2.4.2.-"/>
<dbReference type="EMBL" id="U85771">
    <property type="protein sequence ID" value="AAB42092.1"/>
    <property type="molecule type" value="Genomic_DNA"/>
</dbReference>
<dbReference type="EMBL" id="FM180568">
    <property type="protein sequence ID" value="CAS08864.1"/>
    <property type="molecule type" value="Genomic_DNA"/>
</dbReference>
<dbReference type="RefSeq" id="WP_000576825.1">
    <property type="nucleotide sequence ID" value="NC_011601.1"/>
</dbReference>
<dbReference type="SMR" id="P94777"/>
<dbReference type="KEGG" id="ecg:E2348C_1316"/>
<dbReference type="HOGENOM" id="CLU_039622_2_1_6"/>
<dbReference type="Proteomes" id="UP000008205">
    <property type="component" value="Chromosome"/>
</dbReference>
<dbReference type="GO" id="GO:0005737">
    <property type="term" value="C:cytoplasm"/>
    <property type="evidence" value="ECO:0007669"/>
    <property type="project" value="TreeGrafter"/>
</dbReference>
<dbReference type="GO" id="GO:0004514">
    <property type="term" value="F:nicotinate-nucleotide diphosphorylase (carboxylating) activity"/>
    <property type="evidence" value="ECO:0007669"/>
    <property type="project" value="InterPro"/>
</dbReference>
<dbReference type="GO" id="GO:0009435">
    <property type="term" value="P:NAD biosynthetic process"/>
    <property type="evidence" value="ECO:0007669"/>
    <property type="project" value="InterPro"/>
</dbReference>
<dbReference type="GO" id="GO:0034213">
    <property type="term" value="P:quinolinate catabolic process"/>
    <property type="evidence" value="ECO:0007669"/>
    <property type="project" value="TreeGrafter"/>
</dbReference>
<dbReference type="CDD" id="cd01573">
    <property type="entry name" value="modD_like"/>
    <property type="match status" value="1"/>
</dbReference>
<dbReference type="FunFam" id="3.20.20.70:FF:000030">
    <property type="entry name" value="Nicotinate-nucleotide pyrophosphorylase, carboxylating"/>
    <property type="match status" value="1"/>
</dbReference>
<dbReference type="Gene3D" id="3.20.20.70">
    <property type="entry name" value="Aldolase class I"/>
    <property type="match status" value="1"/>
</dbReference>
<dbReference type="Gene3D" id="3.90.1170.20">
    <property type="entry name" value="Quinolinate phosphoribosyl transferase, N-terminal domain"/>
    <property type="match status" value="1"/>
</dbReference>
<dbReference type="InterPro" id="IPR013785">
    <property type="entry name" value="Aldolase_TIM"/>
</dbReference>
<dbReference type="InterPro" id="IPR006242">
    <property type="entry name" value="ModD"/>
</dbReference>
<dbReference type="InterPro" id="IPR027277">
    <property type="entry name" value="NadC/ModD"/>
</dbReference>
<dbReference type="InterPro" id="IPR036068">
    <property type="entry name" value="Nicotinate_pribotase-like_C"/>
</dbReference>
<dbReference type="InterPro" id="IPR037128">
    <property type="entry name" value="Quinolinate_PRibosylTase_N_sf"/>
</dbReference>
<dbReference type="InterPro" id="IPR002638">
    <property type="entry name" value="Quinolinate_PRibosylTrfase_C"/>
</dbReference>
<dbReference type="InterPro" id="IPR022412">
    <property type="entry name" value="Quinolinate_PRibosylTrfase_N"/>
</dbReference>
<dbReference type="NCBIfam" id="TIGR01334">
    <property type="entry name" value="modD"/>
    <property type="match status" value="1"/>
</dbReference>
<dbReference type="PANTHER" id="PTHR32179">
    <property type="entry name" value="NICOTINATE-NUCLEOTIDE PYROPHOSPHORYLASE [CARBOXYLATING]"/>
    <property type="match status" value="1"/>
</dbReference>
<dbReference type="PANTHER" id="PTHR32179:SF4">
    <property type="entry name" value="PYROPHOSPHORYLASE MODD-RELATED"/>
    <property type="match status" value="1"/>
</dbReference>
<dbReference type="Pfam" id="PF01729">
    <property type="entry name" value="QRPTase_C"/>
    <property type="match status" value="1"/>
</dbReference>
<dbReference type="Pfam" id="PF02749">
    <property type="entry name" value="QRPTase_N"/>
    <property type="match status" value="1"/>
</dbReference>
<dbReference type="PIRSF" id="PIRSF006250">
    <property type="entry name" value="NadC_ModD"/>
    <property type="match status" value="1"/>
</dbReference>
<dbReference type="SUPFAM" id="SSF51690">
    <property type="entry name" value="Nicotinate/Quinolinate PRTase C-terminal domain-like"/>
    <property type="match status" value="1"/>
</dbReference>
<dbReference type="SUPFAM" id="SSF54675">
    <property type="entry name" value="Nicotinate/Quinolinate PRTase N-terminal domain-like"/>
    <property type="match status" value="1"/>
</dbReference>
<evidence type="ECO:0000305" key="1"/>
<sequence>MIFLSQAQIDALLLEDIQGGDLTTRALNIGHQHGYIEFFLRQGGCVSGISVACKMLTTLGLTIDDAVSDGSQANAGQRLIRAQGNAAALHQGWKAVQNVLEWSCGVSDYLAQMLALLRERYPDGNIACTRKAIPGTRLLASQAILAAGGLIHRAGCAETILLFANHRHFLHDNQDWSGAINQLRRHAPEKKIVVEADAPKEAIAALRAQPDVLQLDKFSPQQATEIAQIAPSLAPHCTLALTGGINLTTLKNYLDCGIRLFITSAPYYAAPADIKVSLQPAASI</sequence>
<organism>
    <name type="scientific">Escherichia coli O127:H6 (strain E2348/69 / EPEC)</name>
    <dbReference type="NCBI Taxonomy" id="574521"/>
    <lineage>
        <taxon>Bacteria</taxon>
        <taxon>Pseudomonadati</taxon>
        <taxon>Pseudomonadota</taxon>
        <taxon>Gammaproteobacteria</taxon>
        <taxon>Enterobacterales</taxon>
        <taxon>Enterobacteriaceae</taxon>
        <taxon>Escherichia</taxon>
    </lineage>
</organism>
<accession>P94777</accession>
<accession>B7UQ81</accession>
<accession>O87502</accession>
<protein>
    <recommendedName>
        <fullName>Putative pyrophosphorylase ModD</fullName>
        <ecNumber>2.4.2.-</ecNumber>
    </recommendedName>
</protein>
<name>MODD_ECO27</name>
<feature type="chain" id="PRO_0000155957" description="Putative pyrophosphorylase ModD">
    <location>
        <begin position="1"/>
        <end position="284"/>
    </location>
</feature>
<feature type="sequence conflict" description="In Ref. 1; AAB42092." evidence="1" ref="1">
    <original>CGVSDYLAQMLALLRERYPDGNI</original>
    <variation>LRLFLIISLKCWRYFVNVTLMAIF</variation>
    <location>
        <begin position="104"/>
        <end position="126"/>
    </location>
</feature>
<feature type="sequence conflict" description="In Ref. 1; AAB42092." evidence="1" ref="1">
    <original>A</original>
    <variation>P</variation>
    <location>
        <position position="140"/>
    </location>
</feature>
<gene>
    <name type="primary">modD</name>
    <name type="ordered locus">E2348C_1316</name>
</gene>
<comment type="miscellaneous">
    <text>Orthologs of this gene seem to exist only in pathogenic strains of E.coli but not in the K12 strain.</text>
</comment>
<comment type="similarity">
    <text evidence="1">Belongs to the NadC/ModD family.</text>
</comment>
<comment type="caution">
    <text evidence="1">Was originally (Ref.1) thought to be involved in molybdate transport.</text>
</comment>
<reference key="1">
    <citation type="submission" date="1997-01" db="EMBL/GenBank/DDBJ databases">
        <authorList>
            <person name="Haigh R.D."/>
            <person name="Willliams P.H."/>
        </authorList>
    </citation>
    <scope>NUCLEOTIDE SEQUENCE [GENOMIC DNA]</scope>
</reference>
<reference key="2">
    <citation type="journal article" date="2009" name="J. Bacteriol.">
        <title>Complete genome sequence and comparative genome analysis of enteropathogenic Escherichia coli O127:H6 strain E2348/69.</title>
        <authorList>
            <person name="Iguchi A."/>
            <person name="Thomson N.R."/>
            <person name="Ogura Y."/>
            <person name="Saunders D."/>
            <person name="Ooka T."/>
            <person name="Henderson I.R."/>
            <person name="Harris D."/>
            <person name="Asadulghani M."/>
            <person name="Kurokawa K."/>
            <person name="Dean P."/>
            <person name="Kenny B."/>
            <person name="Quail M.A."/>
            <person name="Thurston S."/>
            <person name="Dougan G."/>
            <person name="Hayashi T."/>
            <person name="Parkhill J."/>
            <person name="Frankel G."/>
        </authorList>
    </citation>
    <scope>NUCLEOTIDE SEQUENCE [LARGE SCALE GENOMIC DNA]</scope>
    <source>
        <strain>E2348/69 / EPEC</strain>
    </source>
</reference>
<keyword id="KW-0328">Glycosyltransferase</keyword>
<keyword id="KW-1185">Reference proteome</keyword>
<keyword id="KW-0808">Transferase</keyword>